<organism>
    <name type="scientific">Danio rerio</name>
    <name type="common">Zebrafish</name>
    <name type="synonym">Brachydanio rerio</name>
    <dbReference type="NCBI Taxonomy" id="7955"/>
    <lineage>
        <taxon>Eukaryota</taxon>
        <taxon>Metazoa</taxon>
        <taxon>Chordata</taxon>
        <taxon>Craniata</taxon>
        <taxon>Vertebrata</taxon>
        <taxon>Euteleostomi</taxon>
        <taxon>Actinopterygii</taxon>
        <taxon>Neopterygii</taxon>
        <taxon>Teleostei</taxon>
        <taxon>Ostariophysi</taxon>
        <taxon>Cypriniformes</taxon>
        <taxon>Danionidae</taxon>
        <taxon>Danioninae</taxon>
        <taxon>Danio</taxon>
    </lineage>
</organism>
<proteinExistence type="evidence at transcript level"/>
<accession>Q5SPD7</accession>
<accession>Q05AI4</accession>
<keyword id="KW-0028">Amino-acid biosynthesis</keyword>
<keyword id="KW-0963">Cytoplasm</keyword>
<keyword id="KW-0521">NADP</keyword>
<keyword id="KW-0560">Oxidoreductase</keyword>
<keyword id="KW-0641">Proline biosynthesis</keyword>
<keyword id="KW-1185">Reference proteome</keyword>
<dbReference type="EC" id="1.5.1.2" evidence="2"/>
<dbReference type="EMBL" id="AL929003">
    <property type="protein sequence ID" value="CAI21008.1"/>
    <property type="molecule type" value="Genomic_DNA"/>
</dbReference>
<dbReference type="EMBL" id="BC124544">
    <property type="protein sequence ID" value="AAI24545.1"/>
    <property type="molecule type" value="mRNA"/>
</dbReference>
<dbReference type="RefSeq" id="NP_001038403.1">
    <property type="nucleotide sequence ID" value="NM_001044938.1"/>
</dbReference>
<dbReference type="SMR" id="Q5SPD7"/>
<dbReference type="FunCoup" id="Q5SPD7">
    <property type="interactions" value="242"/>
</dbReference>
<dbReference type="STRING" id="7955.ENSDARP00000011713"/>
<dbReference type="PaxDb" id="7955-ENSDARP00000011713"/>
<dbReference type="Ensembl" id="ENSDART00000002787">
    <property type="protein sequence ID" value="ENSDARP00000011713"/>
    <property type="gene ID" value="ENSDARG00000015236"/>
</dbReference>
<dbReference type="GeneID" id="560682"/>
<dbReference type="KEGG" id="dre:560682"/>
<dbReference type="AGR" id="ZFIN:ZDB-GENE-041014-244"/>
<dbReference type="CTD" id="65263"/>
<dbReference type="ZFIN" id="ZDB-GENE-041014-244">
    <property type="gene designation" value="pycr3"/>
</dbReference>
<dbReference type="eggNOG" id="KOG3124">
    <property type="taxonomic scope" value="Eukaryota"/>
</dbReference>
<dbReference type="HOGENOM" id="CLU_042344_3_0_1"/>
<dbReference type="InParanoid" id="Q5SPD7"/>
<dbReference type="OMA" id="AKQTCLG"/>
<dbReference type="OrthoDB" id="10263291at2759"/>
<dbReference type="PhylomeDB" id="Q5SPD7"/>
<dbReference type="Reactome" id="R-DRE-8964539">
    <property type="pathway name" value="Glutamate and glutamine metabolism"/>
</dbReference>
<dbReference type="UniPathway" id="UPA00098">
    <property type="reaction ID" value="UER00361"/>
</dbReference>
<dbReference type="PRO" id="PR:Q5SPD7"/>
<dbReference type="Proteomes" id="UP000000437">
    <property type="component" value="Chromosome 20"/>
</dbReference>
<dbReference type="Bgee" id="ENSDARG00000015236">
    <property type="expression patterns" value="Expressed in mature ovarian follicle and 23 other cell types or tissues"/>
</dbReference>
<dbReference type="ExpressionAtlas" id="Q5SPD7">
    <property type="expression patterns" value="baseline"/>
</dbReference>
<dbReference type="GO" id="GO:0005829">
    <property type="term" value="C:cytosol"/>
    <property type="evidence" value="ECO:0000250"/>
    <property type="project" value="UniProtKB"/>
</dbReference>
<dbReference type="GO" id="GO:0004735">
    <property type="term" value="F:pyrroline-5-carboxylate reductase activity"/>
    <property type="evidence" value="ECO:0000250"/>
    <property type="project" value="UniProtKB"/>
</dbReference>
<dbReference type="GO" id="GO:0055129">
    <property type="term" value="P:L-proline biosynthetic process"/>
    <property type="evidence" value="ECO:0000250"/>
    <property type="project" value="UniProtKB"/>
</dbReference>
<dbReference type="FunFam" id="3.40.50.720:FF:000367">
    <property type="entry name" value="Pyrroline-5-carboxylate reductase"/>
    <property type="match status" value="1"/>
</dbReference>
<dbReference type="FunFam" id="1.10.3730.10:FF:000003">
    <property type="entry name" value="Pyrroline-5-carboxylate reductase 1, mitochondrial"/>
    <property type="match status" value="1"/>
</dbReference>
<dbReference type="Gene3D" id="3.40.50.720">
    <property type="entry name" value="NAD(P)-binding Rossmann-like Domain"/>
    <property type="match status" value="1"/>
</dbReference>
<dbReference type="Gene3D" id="1.10.3730.10">
    <property type="entry name" value="ProC C-terminal domain-like"/>
    <property type="match status" value="1"/>
</dbReference>
<dbReference type="HAMAP" id="MF_01925">
    <property type="entry name" value="P5C_reductase"/>
    <property type="match status" value="1"/>
</dbReference>
<dbReference type="InterPro" id="IPR008927">
    <property type="entry name" value="6-PGluconate_DH-like_C_sf"/>
</dbReference>
<dbReference type="InterPro" id="IPR036291">
    <property type="entry name" value="NAD(P)-bd_dom_sf"/>
</dbReference>
<dbReference type="InterPro" id="IPR028939">
    <property type="entry name" value="P5C_Rdtase_cat_N"/>
</dbReference>
<dbReference type="InterPro" id="IPR053790">
    <property type="entry name" value="P5CR-like_CS"/>
</dbReference>
<dbReference type="InterPro" id="IPR029036">
    <property type="entry name" value="P5CR_dimer"/>
</dbReference>
<dbReference type="InterPro" id="IPR000304">
    <property type="entry name" value="Pyrroline-COOH_reductase"/>
</dbReference>
<dbReference type="NCBIfam" id="TIGR00112">
    <property type="entry name" value="proC"/>
    <property type="match status" value="1"/>
</dbReference>
<dbReference type="PANTHER" id="PTHR11645">
    <property type="entry name" value="PYRROLINE-5-CARBOXYLATE REDUCTASE"/>
    <property type="match status" value="1"/>
</dbReference>
<dbReference type="PANTHER" id="PTHR11645:SF0">
    <property type="entry name" value="PYRROLINE-5-CARBOXYLATE REDUCTASE 3"/>
    <property type="match status" value="1"/>
</dbReference>
<dbReference type="Pfam" id="PF03807">
    <property type="entry name" value="F420_oxidored"/>
    <property type="match status" value="1"/>
</dbReference>
<dbReference type="Pfam" id="PF14748">
    <property type="entry name" value="P5CR_dimer"/>
    <property type="match status" value="1"/>
</dbReference>
<dbReference type="PIRSF" id="PIRSF000193">
    <property type="entry name" value="Pyrrol-5-carb_rd"/>
    <property type="match status" value="1"/>
</dbReference>
<dbReference type="SUPFAM" id="SSF48179">
    <property type="entry name" value="6-phosphogluconate dehydrogenase C-terminal domain-like"/>
    <property type="match status" value="1"/>
</dbReference>
<dbReference type="SUPFAM" id="SSF51735">
    <property type="entry name" value="NAD(P)-binding Rossmann-fold domains"/>
    <property type="match status" value="1"/>
</dbReference>
<dbReference type="PROSITE" id="PS00521">
    <property type="entry name" value="P5CR"/>
    <property type="match status" value="1"/>
</dbReference>
<reference key="1">
    <citation type="journal article" date="2013" name="Nature">
        <title>The zebrafish reference genome sequence and its relationship to the human genome.</title>
        <authorList>
            <person name="Howe K."/>
            <person name="Clark M.D."/>
            <person name="Torroja C.F."/>
            <person name="Torrance J."/>
            <person name="Berthelot C."/>
            <person name="Muffato M."/>
            <person name="Collins J.E."/>
            <person name="Humphray S."/>
            <person name="McLaren K."/>
            <person name="Matthews L."/>
            <person name="McLaren S."/>
            <person name="Sealy I."/>
            <person name="Caccamo M."/>
            <person name="Churcher C."/>
            <person name="Scott C."/>
            <person name="Barrett J.C."/>
            <person name="Koch R."/>
            <person name="Rauch G.J."/>
            <person name="White S."/>
            <person name="Chow W."/>
            <person name="Kilian B."/>
            <person name="Quintais L.T."/>
            <person name="Guerra-Assuncao J.A."/>
            <person name="Zhou Y."/>
            <person name="Gu Y."/>
            <person name="Yen J."/>
            <person name="Vogel J.H."/>
            <person name="Eyre T."/>
            <person name="Redmond S."/>
            <person name="Banerjee R."/>
            <person name="Chi J."/>
            <person name="Fu B."/>
            <person name="Langley E."/>
            <person name="Maguire S.F."/>
            <person name="Laird G.K."/>
            <person name="Lloyd D."/>
            <person name="Kenyon E."/>
            <person name="Donaldson S."/>
            <person name="Sehra H."/>
            <person name="Almeida-King J."/>
            <person name="Loveland J."/>
            <person name="Trevanion S."/>
            <person name="Jones M."/>
            <person name="Quail M."/>
            <person name="Willey D."/>
            <person name="Hunt A."/>
            <person name="Burton J."/>
            <person name="Sims S."/>
            <person name="McLay K."/>
            <person name="Plumb B."/>
            <person name="Davis J."/>
            <person name="Clee C."/>
            <person name="Oliver K."/>
            <person name="Clark R."/>
            <person name="Riddle C."/>
            <person name="Elliot D."/>
            <person name="Threadgold G."/>
            <person name="Harden G."/>
            <person name="Ware D."/>
            <person name="Begum S."/>
            <person name="Mortimore B."/>
            <person name="Kerry G."/>
            <person name="Heath P."/>
            <person name="Phillimore B."/>
            <person name="Tracey A."/>
            <person name="Corby N."/>
            <person name="Dunn M."/>
            <person name="Johnson C."/>
            <person name="Wood J."/>
            <person name="Clark S."/>
            <person name="Pelan S."/>
            <person name="Griffiths G."/>
            <person name="Smith M."/>
            <person name="Glithero R."/>
            <person name="Howden P."/>
            <person name="Barker N."/>
            <person name="Lloyd C."/>
            <person name="Stevens C."/>
            <person name="Harley J."/>
            <person name="Holt K."/>
            <person name="Panagiotidis G."/>
            <person name="Lovell J."/>
            <person name="Beasley H."/>
            <person name="Henderson C."/>
            <person name="Gordon D."/>
            <person name="Auger K."/>
            <person name="Wright D."/>
            <person name="Collins J."/>
            <person name="Raisen C."/>
            <person name="Dyer L."/>
            <person name="Leung K."/>
            <person name="Robertson L."/>
            <person name="Ambridge K."/>
            <person name="Leongamornlert D."/>
            <person name="McGuire S."/>
            <person name="Gilderthorp R."/>
            <person name="Griffiths C."/>
            <person name="Manthravadi D."/>
            <person name="Nichol S."/>
            <person name="Barker G."/>
            <person name="Whitehead S."/>
            <person name="Kay M."/>
            <person name="Brown J."/>
            <person name="Murnane C."/>
            <person name="Gray E."/>
            <person name="Humphries M."/>
            <person name="Sycamore N."/>
            <person name="Barker D."/>
            <person name="Saunders D."/>
            <person name="Wallis J."/>
            <person name="Babbage A."/>
            <person name="Hammond S."/>
            <person name="Mashreghi-Mohammadi M."/>
            <person name="Barr L."/>
            <person name="Martin S."/>
            <person name="Wray P."/>
            <person name="Ellington A."/>
            <person name="Matthews N."/>
            <person name="Ellwood M."/>
            <person name="Woodmansey R."/>
            <person name="Clark G."/>
            <person name="Cooper J."/>
            <person name="Tromans A."/>
            <person name="Grafham D."/>
            <person name="Skuce C."/>
            <person name="Pandian R."/>
            <person name="Andrews R."/>
            <person name="Harrison E."/>
            <person name="Kimberley A."/>
            <person name="Garnett J."/>
            <person name="Fosker N."/>
            <person name="Hall R."/>
            <person name="Garner P."/>
            <person name="Kelly D."/>
            <person name="Bird C."/>
            <person name="Palmer S."/>
            <person name="Gehring I."/>
            <person name="Berger A."/>
            <person name="Dooley C.M."/>
            <person name="Ersan-Urun Z."/>
            <person name="Eser C."/>
            <person name="Geiger H."/>
            <person name="Geisler M."/>
            <person name="Karotki L."/>
            <person name="Kirn A."/>
            <person name="Konantz J."/>
            <person name="Konantz M."/>
            <person name="Oberlander M."/>
            <person name="Rudolph-Geiger S."/>
            <person name="Teucke M."/>
            <person name="Lanz C."/>
            <person name="Raddatz G."/>
            <person name="Osoegawa K."/>
            <person name="Zhu B."/>
            <person name="Rapp A."/>
            <person name="Widaa S."/>
            <person name="Langford C."/>
            <person name="Yang F."/>
            <person name="Schuster S.C."/>
            <person name="Carter N.P."/>
            <person name="Harrow J."/>
            <person name="Ning Z."/>
            <person name="Herrero J."/>
            <person name="Searle S.M."/>
            <person name="Enright A."/>
            <person name="Geisler R."/>
            <person name="Plasterk R.H."/>
            <person name="Lee C."/>
            <person name="Westerfield M."/>
            <person name="de Jong P.J."/>
            <person name="Zon L.I."/>
            <person name="Postlethwait J.H."/>
            <person name="Nusslein-Volhard C."/>
            <person name="Hubbard T.J."/>
            <person name="Roest Crollius H."/>
            <person name="Rogers J."/>
            <person name="Stemple D.L."/>
        </authorList>
    </citation>
    <scope>NUCLEOTIDE SEQUENCE [LARGE SCALE GENOMIC DNA]</scope>
    <source>
        <strain>Tuebingen</strain>
    </source>
</reference>
<reference key="2">
    <citation type="submission" date="2006-09" db="EMBL/GenBank/DDBJ databases">
        <authorList>
            <consortium name="NIH - Zebrafish Gene Collection (ZGC) project"/>
        </authorList>
    </citation>
    <scope>NUCLEOTIDE SEQUENCE [LARGE SCALE MRNA] OF 9-288</scope>
</reference>
<gene>
    <name evidence="2" type="primary">pycr3</name>
    <name type="synonym">pycrl</name>
    <name type="ORF">si:dkey-235d18.3</name>
</gene>
<feature type="chain" id="PRO_0000324565" description="Pyrroline-5-carboxylate reductase 3">
    <location>
        <begin position="1"/>
        <end position="288"/>
    </location>
</feature>
<comment type="function">
    <text evidence="2">Oxidoreductase that catalyzes the last step in proline biosynthesis, which corresponds to the reduction of pyrroline-5-carboxylate (P5C) to L-proline using NAD(P)H. Proline is synthesized from either glutamate or ornithine; both are converted to P5C, and then to proline via pyrroline-5-carboxylate reductases (PYCRs). PYCR3 is exclusively linked to the biosynthesis of proline from ornithine.</text>
</comment>
<comment type="catalytic activity">
    <reaction evidence="2">
        <text>L-proline + NADP(+) = (S)-1-pyrroline-5-carboxylate + NADPH + 2 H(+)</text>
        <dbReference type="Rhea" id="RHEA:14109"/>
        <dbReference type="ChEBI" id="CHEBI:15378"/>
        <dbReference type="ChEBI" id="CHEBI:17388"/>
        <dbReference type="ChEBI" id="CHEBI:57783"/>
        <dbReference type="ChEBI" id="CHEBI:58349"/>
        <dbReference type="ChEBI" id="CHEBI:60039"/>
        <dbReference type="EC" id="1.5.1.2"/>
    </reaction>
    <physiologicalReaction direction="right-to-left" evidence="2">
        <dbReference type="Rhea" id="RHEA:14111"/>
    </physiologicalReaction>
</comment>
<comment type="catalytic activity">
    <reaction evidence="2">
        <text>L-proline + NAD(+) = (S)-1-pyrroline-5-carboxylate + NADH + 2 H(+)</text>
        <dbReference type="Rhea" id="RHEA:14105"/>
        <dbReference type="ChEBI" id="CHEBI:15378"/>
        <dbReference type="ChEBI" id="CHEBI:17388"/>
        <dbReference type="ChEBI" id="CHEBI:57540"/>
        <dbReference type="ChEBI" id="CHEBI:57945"/>
        <dbReference type="ChEBI" id="CHEBI:60039"/>
        <dbReference type="EC" id="1.5.1.2"/>
    </reaction>
    <physiologicalReaction direction="right-to-left" evidence="2">
        <dbReference type="Rhea" id="RHEA:14107"/>
    </physiologicalReaction>
</comment>
<comment type="pathway">
    <text evidence="2">Amino-acid biosynthesis; L-proline biosynthesis; L-proline from L-glutamate 5-semialdehyde: step 1/1.</text>
</comment>
<comment type="subunit">
    <text evidence="1">Homodecamer; composed of 5 homodimers.</text>
</comment>
<comment type="subcellular location">
    <subcellularLocation>
        <location evidence="2">Cytoplasm</location>
    </subcellularLocation>
</comment>
<comment type="similarity">
    <text evidence="3">Belongs to the pyrroline-5-carboxylate reductase family.</text>
</comment>
<name>P5CR3_DANRE</name>
<protein>
    <recommendedName>
        <fullName evidence="2">Pyrroline-5-carboxylate reductase 3</fullName>
        <shortName>P5C reductase 3</shortName>
        <shortName>P5CR 3</shortName>
        <ecNumber evidence="2">1.5.1.2</ecNumber>
    </recommendedName>
    <alternativeName>
        <fullName>Pyrroline-5-carboxylate reductase-like protein</fullName>
    </alternativeName>
</protein>
<sequence>MSLSGASDKTSDSPDVFQIKIGFIGAGNMAFGVAQGIIASGKVPPSNIIISAPSMNNLPRFKEKGVSVTHSNHEVVGGSRLIFLAVKPHIIPQVLKEISQEVTKEHIIVSMAAGITIATLEELLPAGTHVIRIMPNLPCMLLEGALLLSCGSHAGEQEETLLKTLLGPCGLVEFGPESWIDAHVGLSGSGVAFVYVFAEALADGAVKMGMPSTLARRIAAQTILGAGVLLRDSGKLPAELKAEVCTPGGTTIHGIHALEKGGFRAAAIGAVEAASERARELGNKQKKN</sequence>
<evidence type="ECO:0000250" key="1">
    <source>
        <dbReference type="UniProtKB" id="P32322"/>
    </source>
</evidence>
<evidence type="ECO:0000250" key="2">
    <source>
        <dbReference type="UniProtKB" id="Q53H96"/>
    </source>
</evidence>
<evidence type="ECO:0000305" key="3"/>